<proteinExistence type="evidence at protein level"/>
<organism>
    <name type="scientific">Dictyostelium discoideum</name>
    <name type="common">Social amoeba</name>
    <dbReference type="NCBI Taxonomy" id="44689"/>
    <lineage>
        <taxon>Eukaryota</taxon>
        <taxon>Amoebozoa</taxon>
        <taxon>Evosea</taxon>
        <taxon>Eumycetozoa</taxon>
        <taxon>Dictyostelia</taxon>
        <taxon>Dictyosteliales</taxon>
        <taxon>Dictyosteliaceae</taxon>
        <taxon>Dictyostelium</taxon>
    </lineage>
</organism>
<protein>
    <recommendedName>
        <fullName>Dual specificity protein kinase zak2</fullName>
        <ecNumber>2.7.12.1</ecNumber>
    </recommendedName>
    <alternativeName>
        <fullName>Tyrosine-protein kinase 4</fullName>
    </alternativeName>
    <alternativeName>
        <fullName>Zaphod K Kinase 2</fullName>
        <shortName>Zaphod kinase 2</shortName>
    </alternativeName>
</protein>
<reference key="1">
    <citation type="journal article" date="1996" name="FEBS Lett.">
        <title>Classification of tyrosine kinases from Dictyostelium discoideum with two distinct, complete or incomplete catalytic domains.</title>
        <authorList>
            <person name="Adler K."/>
            <person name="Gerisch G."/>
            <person name="von Hugo U."/>
            <person name="Lupas A."/>
            <person name="Schweiger A."/>
        </authorList>
    </citation>
    <scope>NUCLEOTIDE SEQUENCE [MRNA]</scope>
    <scope>AUTOPHOSPHORYLATION</scope>
</reference>
<reference key="2">
    <citation type="journal article" date="2011" name="Development">
        <title>Combinatorial cell-specific regulation of GSK3 directs cell differentiation and polarity in Dictyostelium.</title>
        <authorList>
            <person name="Kim L."/>
            <person name="Brzostowski J."/>
            <person name="Majithia A."/>
            <person name="Lee N.S."/>
            <person name="McMains V."/>
            <person name="Kimmel A.R."/>
        </authorList>
    </citation>
    <scope>NUCLEOTIDE SEQUENCE [MRNA]</scope>
    <scope>FUNCTION</scope>
    <scope>TISSUE SPECIFICITY</scope>
    <scope>DEVELOPMENTAL STAGE</scope>
    <scope>DISRUPTION PHENOTYPE</scope>
</reference>
<reference key="3">
    <citation type="journal article" date="2002" name="Nature">
        <title>Sequence and analysis of chromosome 2 of Dictyostelium discoideum.</title>
        <authorList>
            <person name="Gloeckner G."/>
            <person name="Eichinger L."/>
            <person name="Szafranski K."/>
            <person name="Pachebat J.A."/>
            <person name="Bankier A.T."/>
            <person name="Dear P.H."/>
            <person name="Lehmann R."/>
            <person name="Baumgart C."/>
            <person name="Parra G."/>
            <person name="Abril J.F."/>
            <person name="Guigo R."/>
            <person name="Kumpf K."/>
            <person name="Tunggal B."/>
            <person name="Cox E.C."/>
            <person name="Quail M.A."/>
            <person name="Platzer M."/>
            <person name="Rosenthal A."/>
            <person name="Noegel A.A."/>
        </authorList>
    </citation>
    <scope>NUCLEOTIDE SEQUENCE [LARGE SCALE GENOMIC DNA]</scope>
    <source>
        <strain>AX4</strain>
    </source>
</reference>
<reference key="4">
    <citation type="journal article" date="2005" name="Nature">
        <title>The genome of the social amoeba Dictyostelium discoideum.</title>
        <authorList>
            <person name="Eichinger L."/>
            <person name="Pachebat J.A."/>
            <person name="Gloeckner G."/>
            <person name="Rajandream M.A."/>
            <person name="Sucgang R."/>
            <person name="Berriman M."/>
            <person name="Song J."/>
            <person name="Olsen R."/>
            <person name="Szafranski K."/>
            <person name="Xu Q."/>
            <person name="Tunggal B."/>
            <person name="Kummerfeld S."/>
            <person name="Madera M."/>
            <person name="Konfortov B.A."/>
            <person name="Rivero F."/>
            <person name="Bankier A.T."/>
            <person name="Lehmann R."/>
            <person name="Hamlin N."/>
            <person name="Davies R."/>
            <person name="Gaudet P."/>
            <person name="Fey P."/>
            <person name="Pilcher K."/>
            <person name="Chen G."/>
            <person name="Saunders D."/>
            <person name="Sodergren E.J."/>
            <person name="Davis P."/>
            <person name="Kerhornou A."/>
            <person name="Nie X."/>
            <person name="Hall N."/>
            <person name="Anjard C."/>
            <person name="Hemphill L."/>
            <person name="Bason N."/>
            <person name="Farbrother P."/>
            <person name="Desany B."/>
            <person name="Just E."/>
            <person name="Morio T."/>
            <person name="Rost R."/>
            <person name="Churcher C.M."/>
            <person name="Cooper J."/>
            <person name="Haydock S."/>
            <person name="van Driessche N."/>
            <person name="Cronin A."/>
            <person name="Goodhead I."/>
            <person name="Muzny D.M."/>
            <person name="Mourier T."/>
            <person name="Pain A."/>
            <person name="Lu M."/>
            <person name="Harper D."/>
            <person name="Lindsay R."/>
            <person name="Hauser H."/>
            <person name="James K.D."/>
            <person name="Quiles M."/>
            <person name="Madan Babu M."/>
            <person name="Saito T."/>
            <person name="Buchrieser C."/>
            <person name="Wardroper A."/>
            <person name="Felder M."/>
            <person name="Thangavelu M."/>
            <person name="Johnson D."/>
            <person name="Knights A."/>
            <person name="Loulseged H."/>
            <person name="Mungall K.L."/>
            <person name="Oliver K."/>
            <person name="Price C."/>
            <person name="Quail M.A."/>
            <person name="Urushihara H."/>
            <person name="Hernandez J."/>
            <person name="Rabbinowitsch E."/>
            <person name="Steffen D."/>
            <person name="Sanders M."/>
            <person name="Ma J."/>
            <person name="Kohara Y."/>
            <person name="Sharp S."/>
            <person name="Simmonds M.N."/>
            <person name="Spiegler S."/>
            <person name="Tivey A."/>
            <person name="Sugano S."/>
            <person name="White B."/>
            <person name="Walker D."/>
            <person name="Woodward J.R."/>
            <person name="Winckler T."/>
            <person name="Tanaka Y."/>
            <person name="Shaulsky G."/>
            <person name="Schleicher M."/>
            <person name="Weinstock G.M."/>
            <person name="Rosenthal A."/>
            <person name="Cox E.C."/>
            <person name="Chisholm R.L."/>
            <person name="Gibbs R.A."/>
            <person name="Loomis W.F."/>
            <person name="Platzer M."/>
            <person name="Kay R.R."/>
            <person name="Williams J.G."/>
            <person name="Dear P.H."/>
            <person name="Noegel A.A."/>
            <person name="Barrell B.G."/>
            <person name="Kuspa A."/>
        </authorList>
    </citation>
    <scope>NUCLEOTIDE SEQUENCE [LARGE SCALE GENOMIC DNA]</scope>
    <source>
        <strain>AX4</strain>
    </source>
</reference>
<feature type="chain" id="PRO_0000355202" description="Dual specificity protein kinase zak2">
    <location>
        <begin position="1"/>
        <end position="635"/>
    </location>
</feature>
<feature type="domain" description="Protein kinase 1" evidence="2">
    <location>
        <begin position="9"/>
        <end position="249"/>
    </location>
</feature>
<feature type="domain" description="Protein kinase 2" evidence="2">
    <location>
        <begin position="299"/>
        <end position="585"/>
    </location>
</feature>
<feature type="active site" description="Proton acceptor" evidence="1">
    <location>
        <position position="124"/>
    </location>
</feature>
<feature type="active site" description="Proton acceptor" evidence="1">
    <location>
        <position position="427"/>
    </location>
</feature>
<feature type="binding site" evidence="2">
    <location>
        <begin position="15"/>
        <end position="23"/>
    </location>
    <ligand>
        <name>ATP</name>
        <dbReference type="ChEBI" id="CHEBI:30616"/>
    </ligand>
</feature>
<feature type="binding site" evidence="2">
    <location>
        <position position="45"/>
    </location>
    <ligand>
        <name>ATP</name>
        <dbReference type="ChEBI" id="CHEBI:30616"/>
    </ligand>
</feature>
<feature type="binding site" evidence="2">
    <location>
        <begin position="305"/>
        <end position="313"/>
    </location>
    <ligand>
        <name>ATP</name>
        <dbReference type="ChEBI" id="CHEBI:30616"/>
    </ligand>
</feature>
<feature type="binding site" evidence="2">
    <location>
        <position position="326"/>
    </location>
    <ligand>
        <name>ATP</name>
        <dbReference type="ChEBI" id="CHEBI:30616"/>
    </ligand>
</feature>
<accession>Q552C6</accession>
<accession>Q75JK1</accession>
<evidence type="ECO:0000250" key="1"/>
<evidence type="ECO:0000255" key="2">
    <source>
        <dbReference type="PROSITE-ProRule" id="PRU00159"/>
    </source>
</evidence>
<evidence type="ECO:0000269" key="3">
    <source>
    </source>
</evidence>
<evidence type="ECO:0000305" key="4"/>
<name>ZAK2_DICDI</name>
<comment type="function">
    <text evidence="3">Positive regulator of gsk3/gskA activity required for cell pattern formation and a downstream effector of carC. The kinases, gsk3/gskA, zakA and zak2, form part of a signaling pathway that responds to extracellular cyclic AMP. The pathway has a role in transcriptional regulation; required to direct prespore/spore fates during development. Zak2 negatively regulates prestalk differentiation by regulating expression of ecmA. Phosphorylates Y-214 of gsk3/gskA, in vitro.</text>
</comment>
<comment type="catalytic activity">
    <reaction>
        <text>L-seryl-[protein] + ATP = O-phospho-L-seryl-[protein] + ADP + H(+)</text>
        <dbReference type="Rhea" id="RHEA:17989"/>
        <dbReference type="Rhea" id="RHEA-COMP:9863"/>
        <dbReference type="Rhea" id="RHEA-COMP:11604"/>
        <dbReference type="ChEBI" id="CHEBI:15378"/>
        <dbReference type="ChEBI" id="CHEBI:29999"/>
        <dbReference type="ChEBI" id="CHEBI:30616"/>
        <dbReference type="ChEBI" id="CHEBI:83421"/>
        <dbReference type="ChEBI" id="CHEBI:456216"/>
        <dbReference type="EC" id="2.7.12.1"/>
    </reaction>
</comment>
<comment type="catalytic activity">
    <reaction>
        <text>L-threonyl-[protein] + ATP = O-phospho-L-threonyl-[protein] + ADP + H(+)</text>
        <dbReference type="Rhea" id="RHEA:46608"/>
        <dbReference type="Rhea" id="RHEA-COMP:11060"/>
        <dbReference type="Rhea" id="RHEA-COMP:11605"/>
        <dbReference type="ChEBI" id="CHEBI:15378"/>
        <dbReference type="ChEBI" id="CHEBI:30013"/>
        <dbReference type="ChEBI" id="CHEBI:30616"/>
        <dbReference type="ChEBI" id="CHEBI:61977"/>
        <dbReference type="ChEBI" id="CHEBI:456216"/>
        <dbReference type="EC" id="2.7.12.1"/>
    </reaction>
</comment>
<comment type="catalytic activity">
    <reaction>
        <text>L-tyrosyl-[protein] + ATP = O-phospho-L-tyrosyl-[protein] + ADP + H(+)</text>
        <dbReference type="Rhea" id="RHEA:10596"/>
        <dbReference type="Rhea" id="RHEA-COMP:10136"/>
        <dbReference type="Rhea" id="RHEA-COMP:20101"/>
        <dbReference type="ChEBI" id="CHEBI:15378"/>
        <dbReference type="ChEBI" id="CHEBI:30616"/>
        <dbReference type="ChEBI" id="CHEBI:46858"/>
        <dbReference type="ChEBI" id="CHEBI:61978"/>
        <dbReference type="ChEBI" id="CHEBI:456216"/>
        <dbReference type="EC" id="2.7.12.1"/>
    </reaction>
</comment>
<comment type="tissue specificity">
    <text evidence="3">ZakA and zak2 are coexpressed in prestalk cell population, zakA is enriched in pstB populations and zak1 in pstA populations. ZakA and zak2 are coexpressed in prespore cells, zakA expression levels are 10 fold higher than zak2.</text>
</comment>
<comment type="developmental stage">
    <text evidence="3">Expressed during the growth phase and throughout the major developmental stages.</text>
</comment>
<comment type="PTM">
    <text>C-terminal tyrosine kinase domain is capable of autophosphorylation, in vitro.</text>
</comment>
<comment type="disruption phenotype">
    <text evidence="3">Abnormal morphology of the terminal fruiting body; the sorus, or large spore mass atop an elongated stalk of vacuolated cells, does not form and the stalk structure is expanded.</text>
</comment>
<comment type="miscellaneous">
    <text>'Zaphod' is a fictional ex-president of the galaxy with 2 heads.</text>
</comment>
<comment type="similarity">
    <text evidence="4">In the N-terminal section; belongs to the protein kinase superfamily. Ser/Thr protein kinase family.</text>
</comment>
<comment type="similarity">
    <text evidence="4">In the C-terminal section; belongs to the protein kinase superfamily. TKL Tyr protein kinase family.</text>
</comment>
<sequence length="635" mass="72979">MNSHKKEEWEEISSIGSCNSKSRVLKCRKKNGLIENEKVDIVAVKIINKKFFKRNETDILEKIRLFNIPRYYSHAEDDNYIYIYMEYIEDKKQLRFKESEIISMIADLTETLSFLHKHQILHRDIKPSNIILDKNGVLKLIDFGSSIIDQQQDDGDNICKESSFAITGTHTYMAPEVKKLHRSTKKSDVWSLGCTVLEIVGGNPKKIFDGIPIIPNHVSEIMVDFIKRCLIIDPNKRSHMEELLTHRLISSMVGQNKNRENNIEPKFNNDYLSSKFPERFAPRFEKPKWEIEFNELKFNKDDTVGGDGFFSVVKKGYYNETEVAIKLIKKAHGENVTVCDTFYHEVLIISNLRHPNIVQFIAACIKFDNKEVNHCIVSEWMSGGNLSQFISNERKILEINPHLRVKILLDIAKGMLYSHRQGIIHRDLTSNNVLLNFRKKKLLNNNSSNNDEQFYDSDEIIAKVCDFGLSSNQSESKKLRGGSIHYMAPENLNGSPINEKSDIYSFGLLVWQMFSYASPNTIYSPKEMASMVSDEKLNYRPQIPFNVPLKFKELITQCWDRNPLNRPKDFSEIIDKLKDINQIYFQDNSNASTISSTAITTTISTISISNSGNSSYSTSDDSSTYGSGFYNSGFL</sequence>
<keyword id="KW-0067">ATP-binding</keyword>
<keyword id="KW-0217">Developmental protein</keyword>
<keyword id="KW-0418">Kinase</keyword>
<keyword id="KW-0547">Nucleotide-binding</keyword>
<keyword id="KW-0597">Phosphoprotein</keyword>
<keyword id="KW-1185">Reference proteome</keyword>
<keyword id="KW-0677">Repeat</keyword>
<keyword id="KW-0723">Serine/threonine-protein kinase</keyword>
<keyword id="KW-0808">Transferase</keyword>
<keyword id="KW-0829">Tyrosine-protein kinase</keyword>
<gene>
    <name type="primary">zak2</name>
    <name type="synonym">DpyK4</name>
    <name type="synonym">pyk4</name>
    <name type="ORF">DDB_G0276187</name>
</gene>
<dbReference type="EC" id="2.7.12.1"/>
<dbReference type="EMBL" id="AAFI02000014">
    <property type="protein sequence ID" value="EAL69393.1"/>
    <property type="molecule type" value="Genomic_DNA"/>
</dbReference>
<dbReference type="RefSeq" id="XP_643302.1">
    <property type="nucleotide sequence ID" value="XM_638210.1"/>
</dbReference>
<dbReference type="SMR" id="Q552C6"/>
<dbReference type="FunCoup" id="Q552C6">
    <property type="interactions" value="4"/>
</dbReference>
<dbReference type="STRING" id="44689.Q552C6"/>
<dbReference type="PaxDb" id="44689-DDB0229958"/>
<dbReference type="EnsemblProtists" id="EAL69393">
    <property type="protein sequence ID" value="EAL69393"/>
    <property type="gene ID" value="DDB_G0276187"/>
</dbReference>
<dbReference type="GeneID" id="8620348"/>
<dbReference type="KEGG" id="ddi:DDB_G0276187"/>
<dbReference type="dictyBase" id="DDB_G0276187">
    <property type="gene designation" value="zak2"/>
</dbReference>
<dbReference type="VEuPathDB" id="AmoebaDB:DDB_G0276187"/>
<dbReference type="eggNOG" id="KOG0192">
    <property type="taxonomic scope" value="Eukaryota"/>
</dbReference>
<dbReference type="eggNOG" id="KOG0198">
    <property type="taxonomic scope" value="Eukaryota"/>
</dbReference>
<dbReference type="HOGENOM" id="CLU_431134_0_0_1"/>
<dbReference type="InParanoid" id="Q552C6"/>
<dbReference type="OMA" id="FNDECTE"/>
<dbReference type="PhylomeDB" id="Q552C6"/>
<dbReference type="Reactome" id="R-DDI-5675482">
    <property type="pathway name" value="Regulation of necroptotic cell death"/>
</dbReference>
<dbReference type="PRO" id="PR:Q552C6"/>
<dbReference type="Proteomes" id="UP000002195">
    <property type="component" value="Chromosome 2"/>
</dbReference>
<dbReference type="GO" id="GO:0005737">
    <property type="term" value="C:cytoplasm"/>
    <property type="evidence" value="ECO:0000318"/>
    <property type="project" value="GO_Central"/>
</dbReference>
<dbReference type="GO" id="GO:0005524">
    <property type="term" value="F:ATP binding"/>
    <property type="evidence" value="ECO:0000305"/>
    <property type="project" value="dictyBase"/>
</dbReference>
<dbReference type="GO" id="GO:0004672">
    <property type="term" value="F:protein kinase activity"/>
    <property type="evidence" value="ECO:0000318"/>
    <property type="project" value="GO_Central"/>
</dbReference>
<dbReference type="GO" id="GO:0106310">
    <property type="term" value="F:protein serine kinase activity"/>
    <property type="evidence" value="ECO:0007669"/>
    <property type="project" value="RHEA"/>
</dbReference>
<dbReference type="GO" id="GO:0004674">
    <property type="term" value="F:protein serine/threonine kinase activity"/>
    <property type="evidence" value="ECO:0007669"/>
    <property type="project" value="UniProtKB-KW"/>
</dbReference>
<dbReference type="GO" id="GO:0004712">
    <property type="term" value="F:protein serine/threonine/tyrosine kinase activity"/>
    <property type="evidence" value="ECO:0007669"/>
    <property type="project" value="UniProtKB-EC"/>
</dbReference>
<dbReference type="GO" id="GO:0004713">
    <property type="term" value="F:protein tyrosine kinase activity"/>
    <property type="evidence" value="ECO:0000314"/>
    <property type="project" value="dictyBase"/>
</dbReference>
<dbReference type="GO" id="GO:0019933">
    <property type="term" value="P:cAMP-mediated signaling"/>
    <property type="evidence" value="ECO:0000314"/>
    <property type="project" value="dictyBase"/>
</dbReference>
<dbReference type="GO" id="GO:0042659">
    <property type="term" value="P:regulation of cell fate specification"/>
    <property type="evidence" value="ECO:0000315"/>
    <property type="project" value="dictyBase"/>
</dbReference>
<dbReference type="GO" id="GO:0010468">
    <property type="term" value="P:regulation of gene expression"/>
    <property type="evidence" value="ECO:0000314"/>
    <property type="project" value="dictyBase"/>
</dbReference>
<dbReference type="GO" id="GO:0007165">
    <property type="term" value="P:signal transduction"/>
    <property type="evidence" value="ECO:0000318"/>
    <property type="project" value="GO_Central"/>
</dbReference>
<dbReference type="GO" id="GO:0031288">
    <property type="term" value="P:sorocarp morphogenesis"/>
    <property type="evidence" value="ECO:0000315"/>
    <property type="project" value="dictyBase"/>
</dbReference>
<dbReference type="GO" id="GO:0030435">
    <property type="term" value="P:sporulation resulting in formation of a cellular spore"/>
    <property type="evidence" value="ECO:0000315"/>
    <property type="project" value="dictyBase"/>
</dbReference>
<dbReference type="CDD" id="cd13999">
    <property type="entry name" value="STKc_MAP3K-like"/>
    <property type="match status" value="1"/>
</dbReference>
<dbReference type="FunFam" id="1.10.510.10:FF:001915">
    <property type="entry name" value="Dual specificity protein kinase zak2"/>
    <property type="match status" value="1"/>
</dbReference>
<dbReference type="FunFam" id="3.30.200.20:FF:000180">
    <property type="entry name" value="serine/threonine-protein kinase STY46-like"/>
    <property type="match status" value="1"/>
</dbReference>
<dbReference type="Gene3D" id="3.30.200.20">
    <property type="entry name" value="Phosphorylase Kinase, domain 1"/>
    <property type="match status" value="2"/>
</dbReference>
<dbReference type="Gene3D" id="1.10.510.10">
    <property type="entry name" value="Transferase(Phosphotransferase) domain 1"/>
    <property type="match status" value="2"/>
</dbReference>
<dbReference type="InterPro" id="IPR011009">
    <property type="entry name" value="Kinase-like_dom_sf"/>
</dbReference>
<dbReference type="InterPro" id="IPR000719">
    <property type="entry name" value="Prot_kinase_dom"/>
</dbReference>
<dbReference type="InterPro" id="IPR001245">
    <property type="entry name" value="Ser-Thr/Tyr_kinase_cat_dom"/>
</dbReference>
<dbReference type="InterPro" id="IPR008271">
    <property type="entry name" value="Ser/Thr_kinase_AS"/>
</dbReference>
<dbReference type="InterPro" id="IPR051681">
    <property type="entry name" value="Ser/Thr_Kinases-Pseudokinases"/>
</dbReference>
<dbReference type="InterPro" id="IPR008266">
    <property type="entry name" value="Tyr_kinase_AS"/>
</dbReference>
<dbReference type="PANTHER" id="PTHR44329:SF298">
    <property type="entry name" value="MIXED LINEAGE KINASE DOMAIN-LIKE PROTEIN"/>
    <property type="match status" value="1"/>
</dbReference>
<dbReference type="PANTHER" id="PTHR44329">
    <property type="entry name" value="SERINE/THREONINE-PROTEIN KINASE TNNI3K-RELATED"/>
    <property type="match status" value="1"/>
</dbReference>
<dbReference type="Pfam" id="PF07714">
    <property type="entry name" value="PK_Tyr_Ser-Thr"/>
    <property type="match status" value="1"/>
</dbReference>
<dbReference type="Pfam" id="PF00069">
    <property type="entry name" value="Pkinase"/>
    <property type="match status" value="1"/>
</dbReference>
<dbReference type="SMART" id="SM00220">
    <property type="entry name" value="S_TKc"/>
    <property type="match status" value="2"/>
</dbReference>
<dbReference type="SUPFAM" id="SSF56112">
    <property type="entry name" value="Protein kinase-like (PK-like)"/>
    <property type="match status" value="2"/>
</dbReference>
<dbReference type="PROSITE" id="PS50011">
    <property type="entry name" value="PROTEIN_KINASE_DOM"/>
    <property type="match status" value="2"/>
</dbReference>
<dbReference type="PROSITE" id="PS00108">
    <property type="entry name" value="PROTEIN_KINASE_ST"/>
    <property type="match status" value="1"/>
</dbReference>
<dbReference type="PROSITE" id="PS00109">
    <property type="entry name" value="PROTEIN_KINASE_TYR"/>
    <property type="match status" value="1"/>
</dbReference>